<keyword id="KW-0963">Cytoplasm</keyword>
<keyword id="KW-0489">Methyltransferase</keyword>
<keyword id="KW-1185">Reference proteome</keyword>
<keyword id="KW-0949">S-adenosyl-L-methionine</keyword>
<keyword id="KW-0808">Transferase</keyword>
<evidence type="ECO:0000255" key="1">
    <source>
        <dbReference type="HAMAP-Rule" id="MF_00735"/>
    </source>
</evidence>
<organism>
    <name type="scientific">Escherichia coli O45:K1 (strain S88 / ExPEC)</name>
    <dbReference type="NCBI Taxonomy" id="585035"/>
    <lineage>
        <taxon>Bacteria</taxon>
        <taxon>Pseudomonadati</taxon>
        <taxon>Pseudomonadota</taxon>
        <taxon>Gammaproteobacteria</taxon>
        <taxon>Enterobacterales</taxon>
        <taxon>Enterobacteriaceae</taxon>
        <taxon>Escherichia</taxon>
    </lineage>
</organism>
<gene>
    <name evidence="1" type="primary">prmA</name>
    <name type="ordered locus">ECS88_3644</name>
</gene>
<sequence length="293" mass="31877">MPWIQLKLNTTGANAEDLSDALMEAGAVSITFQDTHDTPVFEPLPGETRLWGDTDVIGLFDAETDMNDVVAILENHPLLGAGFAHKIEQLEDKDWEREWMDNFHPMRFGERLWICPSWRDVPDENAVNVMLDPGLAFGTGTHPTTSLCLQWLDSLDLTGKTVIDFGCGSGILAIAALKLGAAKAIGIDIDPQAIQASRDNAERNGVSDRLELYLPKDQPEEMKADVVVANILAGPLRELAPLISVLPVSGGLLGLSGILASQAESVCEAYADSFALDPVVEKEEWCRITGRKN</sequence>
<accession>B7MC29</accession>
<proteinExistence type="inferred from homology"/>
<name>PRMA_ECO45</name>
<comment type="function">
    <text evidence="1">Methylates ribosomal protein L11.</text>
</comment>
<comment type="catalytic activity">
    <reaction evidence="1">
        <text>L-lysyl-[protein] + 3 S-adenosyl-L-methionine = N(6),N(6),N(6)-trimethyl-L-lysyl-[protein] + 3 S-adenosyl-L-homocysteine + 3 H(+)</text>
        <dbReference type="Rhea" id="RHEA:54192"/>
        <dbReference type="Rhea" id="RHEA-COMP:9752"/>
        <dbReference type="Rhea" id="RHEA-COMP:13826"/>
        <dbReference type="ChEBI" id="CHEBI:15378"/>
        <dbReference type="ChEBI" id="CHEBI:29969"/>
        <dbReference type="ChEBI" id="CHEBI:57856"/>
        <dbReference type="ChEBI" id="CHEBI:59789"/>
        <dbReference type="ChEBI" id="CHEBI:61961"/>
    </reaction>
</comment>
<comment type="subcellular location">
    <subcellularLocation>
        <location evidence="1">Cytoplasm</location>
    </subcellularLocation>
</comment>
<comment type="similarity">
    <text evidence="1">Belongs to the methyltransferase superfamily. PrmA family.</text>
</comment>
<reference key="1">
    <citation type="journal article" date="2009" name="PLoS Genet.">
        <title>Organised genome dynamics in the Escherichia coli species results in highly diverse adaptive paths.</title>
        <authorList>
            <person name="Touchon M."/>
            <person name="Hoede C."/>
            <person name="Tenaillon O."/>
            <person name="Barbe V."/>
            <person name="Baeriswyl S."/>
            <person name="Bidet P."/>
            <person name="Bingen E."/>
            <person name="Bonacorsi S."/>
            <person name="Bouchier C."/>
            <person name="Bouvet O."/>
            <person name="Calteau A."/>
            <person name="Chiapello H."/>
            <person name="Clermont O."/>
            <person name="Cruveiller S."/>
            <person name="Danchin A."/>
            <person name="Diard M."/>
            <person name="Dossat C."/>
            <person name="Karoui M.E."/>
            <person name="Frapy E."/>
            <person name="Garry L."/>
            <person name="Ghigo J.M."/>
            <person name="Gilles A.M."/>
            <person name="Johnson J."/>
            <person name="Le Bouguenec C."/>
            <person name="Lescat M."/>
            <person name="Mangenot S."/>
            <person name="Martinez-Jehanne V."/>
            <person name="Matic I."/>
            <person name="Nassif X."/>
            <person name="Oztas S."/>
            <person name="Petit M.A."/>
            <person name="Pichon C."/>
            <person name="Rouy Z."/>
            <person name="Ruf C.S."/>
            <person name="Schneider D."/>
            <person name="Tourret J."/>
            <person name="Vacherie B."/>
            <person name="Vallenet D."/>
            <person name="Medigue C."/>
            <person name="Rocha E.P.C."/>
            <person name="Denamur E."/>
        </authorList>
    </citation>
    <scope>NUCLEOTIDE SEQUENCE [LARGE SCALE GENOMIC DNA]</scope>
    <source>
        <strain>S88 / ExPEC</strain>
    </source>
</reference>
<feature type="chain" id="PRO_1000192627" description="Ribosomal protein L11 methyltransferase">
    <location>
        <begin position="1"/>
        <end position="293"/>
    </location>
</feature>
<feature type="binding site" evidence="1">
    <location>
        <position position="145"/>
    </location>
    <ligand>
        <name>S-adenosyl-L-methionine</name>
        <dbReference type="ChEBI" id="CHEBI:59789"/>
    </ligand>
</feature>
<feature type="binding site" evidence="1">
    <location>
        <position position="166"/>
    </location>
    <ligand>
        <name>S-adenosyl-L-methionine</name>
        <dbReference type="ChEBI" id="CHEBI:59789"/>
    </ligand>
</feature>
<feature type="binding site" evidence="1">
    <location>
        <position position="188"/>
    </location>
    <ligand>
        <name>S-adenosyl-L-methionine</name>
        <dbReference type="ChEBI" id="CHEBI:59789"/>
    </ligand>
</feature>
<feature type="binding site" evidence="1">
    <location>
        <position position="230"/>
    </location>
    <ligand>
        <name>S-adenosyl-L-methionine</name>
        <dbReference type="ChEBI" id="CHEBI:59789"/>
    </ligand>
</feature>
<protein>
    <recommendedName>
        <fullName evidence="1">Ribosomal protein L11 methyltransferase</fullName>
        <shortName evidence="1">L11 Mtase</shortName>
        <ecNumber evidence="1">2.1.1.-</ecNumber>
    </recommendedName>
</protein>
<dbReference type="EC" id="2.1.1.-" evidence="1"/>
<dbReference type="EMBL" id="CU928161">
    <property type="protein sequence ID" value="CAR04870.1"/>
    <property type="molecule type" value="Genomic_DNA"/>
</dbReference>
<dbReference type="RefSeq" id="WP_001145827.1">
    <property type="nucleotide sequence ID" value="NC_011742.1"/>
</dbReference>
<dbReference type="SMR" id="B7MC29"/>
<dbReference type="GeneID" id="75206107"/>
<dbReference type="KEGG" id="ecz:ECS88_3644"/>
<dbReference type="HOGENOM" id="CLU_049382_4_1_6"/>
<dbReference type="Proteomes" id="UP000000747">
    <property type="component" value="Chromosome"/>
</dbReference>
<dbReference type="GO" id="GO:0005829">
    <property type="term" value="C:cytosol"/>
    <property type="evidence" value="ECO:0007669"/>
    <property type="project" value="TreeGrafter"/>
</dbReference>
<dbReference type="GO" id="GO:0016279">
    <property type="term" value="F:protein-lysine N-methyltransferase activity"/>
    <property type="evidence" value="ECO:0007669"/>
    <property type="project" value="TreeGrafter"/>
</dbReference>
<dbReference type="GO" id="GO:0032259">
    <property type="term" value="P:methylation"/>
    <property type="evidence" value="ECO:0007669"/>
    <property type="project" value="UniProtKB-KW"/>
</dbReference>
<dbReference type="CDD" id="cd02440">
    <property type="entry name" value="AdoMet_MTases"/>
    <property type="match status" value="1"/>
</dbReference>
<dbReference type="FunFam" id="3.40.50.150:FF:000021">
    <property type="entry name" value="Ribosomal protein L11 methyltransferase"/>
    <property type="match status" value="1"/>
</dbReference>
<dbReference type="Gene3D" id="3.40.50.150">
    <property type="entry name" value="Vaccinia Virus protein VP39"/>
    <property type="match status" value="1"/>
</dbReference>
<dbReference type="HAMAP" id="MF_00735">
    <property type="entry name" value="Methyltr_PrmA"/>
    <property type="match status" value="1"/>
</dbReference>
<dbReference type="InterPro" id="IPR050078">
    <property type="entry name" value="Ribosomal_L11_MeTrfase_PrmA"/>
</dbReference>
<dbReference type="InterPro" id="IPR004498">
    <property type="entry name" value="Ribosomal_PrmA_MeTrfase"/>
</dbReference>
<dbReference type="InterPro" id="IPR029063">
    <property type="entry name" value="SAM-dependent_MTases_sf"/>
</dbReference>
<dbReference type="NCBIfam" id="TIGR00406">
    <property type="entry name" value="prmA"/>
    <property type="match status" value="1"/>
</dbReference>
<dbReference type="PANTHER" id="PTHR43648">
    <property type="entry name" value="ELECTRON TRANSFER FLAVOPROTEIN BETA SUBUNIT LYSINE METHYLTRANSFERASE"/>
    <property type="match status" value="1"/>
</dbReference>
<dbReference type="PANTHER" id="PTHR43648:SF1">
    <property type="entry name" value="ELECTRON TRANSFER FLAVOPROTEIN BETA SUBUNIT LYSINE METHYLTRANSFERASE"/>
    <property type="match status" value="1"/>
</dbReference>
<dbReference type="Pfam" id="PF06325">
    <property type="entry name" value="PrmA"/>
    <property type="match status" value="1"/>
</dbReference>
<dbReference type="PIRSF" id="PIRSF000401">
    <property type="entry name" value="RPL11_MTase"/>
    <property type="match status" value="1"/>
</dbReference>
<dbReference type="SUPFAM" id="SSF53335">
    <property type="entry name" value="S-adenosyl-L-methionine-dependent methyltransferases"/>
    <property type="match status" value="1"/>
</dbReference>